<evidence type="ECO:0000250" key="1">
    <source>
        <dbReference type="UniProtKB" id="Q9HAJ7"/>
    </source>
</evidence>
<evidence type="ECO:0000256" key="2">
    <source>
        <dbReference type="SAM" id="MobiDB-lite"/>
    </source>
</evidence>
<evidence type="ECO:0000305" key="3"/>
<dbReference type="EMBL" id="CR760983">
    <property type="protein sequence ID" value="CAJ82106.1"/>
    <property type="molecule type" value="mRNA"/>
</dbReference>
<dbReference type="RefSeq" id="NP_001017141.1">
    <property type="nucleotide sequence ID" value="NM_001017141.2"/>
</dbReference>
<dbReference type="RefSeq" id="XP_012814539.1">
    <property type="nucleotide sequence ID" value="XM_012959085.3"/>
</dbReference>
<dbReference type="SMR" id="Q28H91"/>
<dbReference type="FunCoup" id="Q28H91">
    <property type="interactions" value="2999"/>
</dbReference>
<dbReference type="STRING" id="8364.ENSXETP00000048358"/>
<dbReference type="PaxDb" id="8364-ENSXETP00000018550"/>
<dbReference type="GeneID" id="549895"/>
<dbReference type="KEGG" id="xtr:549895"/>
<dbReference type="AGR" id="Xenbase:XB-GENE-960202"/>
<dbReference type="CTD" id="79685"/>
<dbReference type="Xenbase" id="XB-GENE-960202">
    <property type="gene designation" value="sap30l"/>
</dbReference>
<dbReference type="eggNOG" id="ENOG502QWFH">
    <property type="taxonomic scope" value="Eukaryota"/>
</dbReference>
<dbReference type="HOGENOM" id="CLU_097961_1_0_1"/>
<dbReference type="InParanoid" id="Q28H91"/>
<dbReference type="OMA" id="SDQICCL"/>
<dbReference type="OrthoDB" id="510958at2759"/>
<dbReference type="PhylomeDB" id="Q28H91"/>
<dbReference type="TreeFam" id="TF324135"/>
<dbReference type="Reactome" id="R-XTR-3214815">
    <property type="pathway name" value="HDACs deacetylate histones"/>
</dbReference>
<dbReference type="Proteomes" id="UP000008143">
    <property type="component" value="Chromosome 3"/>
</dbReference>
<dbReference type="Bgee" id="ENSXETG00000034608">
    <property type="expression patterns" value="Expressed in egg cell and 12 other cell types or tissues"/>
</dbReference>
<dbReference type="GO" id="GO:0000118">
    <property type="term" value="C:histone deacetylase complex"/>
    <property type="evidence" value="ECO:0000250"/>
    <property type="project" value="UniProtKB"/>
</dbReference>
<dbReference type="GO" id="GO:0005730">
    <property type="term" value="C:nucleolus"/>
    <property type="evidence" value="ECO:0000250"/>
    <property type="project" value="UniProtKB"/>
</dbReference>
<dbReference type="GO" id="GO:0003677">
    <property type="term" value="F:DNA binding"/>
    <property type="evidence" value="ECO:0000250"/>
    <property type="project" value="UniProtKB"/>
</dbReference>
<dbReference type="GO" id="GO:0042393">
    <property type="term" value="F:histone binding"/>
    <property type="evidence" value="ECO:0000250"/>
    <property type="project" value="UniProtKB"/>
</dbReference>
<dbReference type="GO" id="GO:0044378">
    <property type="term" value="F:non-sequence-specific DNA binding, bending"/>
    <property type="evidence" value="ECO:0000250"/>
    <property type="project" value="UniProtKB"/>
</dbReference>
<dbReference type="GO" id="GO:0031491">
    <property type="term" value="F:nucleosome binding"/>
    <property type="evidence" value="ECO:0000250"/>
    <property type="project" value="UniProtKB"/>
</dbReference>
<dbReference type="GO" id="GO:0032266">
    <property type="term" value="F:phosphatidylinositol-3-phosphate binding"/>
    <property type="evidence" value="ECO:0000250"/>
    <property type="project" value="UniProtKB"/>
</dbReference>
<dbReference type="GO" id="GO:0070273">
    <property type="term" value="F:phosphatidylinositol-4-phosphate binding"/>
    <property type="evidence" value="ECO:0000250"/>
    <property type="project" value="UniProtKB"/>
</dbReference>
<dbReference type="GO" id="GO:0010314">
    <property type="term" value="F:phosphatidylinositol-5-phosphate binding"/>
    <property type="evidence" value="ECO:0000250"/>
    <property type="project" value="UniProtKB"/>
</dbReference>
<dbReference type="GO" id="GO:0008270">
    <property type="term" value="F:zinc ion binding"/>
    <property type="evidence" value="ECO:0000250"/>
    <property type="project" value="UniProtKB"/>
</dbReference>
<dbReference type="GO" id="GO:0000122">
    <property type="term" value="P:negative regulation of transcription by RNA polymerase II"/>
    <property type="evidence" value="ECO:0000250"/>
    <property type="project" value="UniProtKB"/>
</dbReference>
<dbReference type="FunFam" id="3.40.1800.30:FF:000001">
    <property type="entry name" value="Histone deacetylase complex subunit"/>
    <property type="match status" value="1"/>
</dbReference>
<dbReference type="Gene3D" id="3.40.1800.30">
    <property type="match status" value="1"/>
</dbReference>
<dbReference type="Gene3D" id="6.10.160.20">
    <property type="match status" value="1"/>
</dbReference>
<dbReference type="InterPro" id="IPR024145">
    <property type="entry name" value="His_deAcase_SAP30/SAP30L"/>
</dbReference>
<dbReference type="InterPro" id="IPR038291">
    <property type="entry name" value="SAP30_C_sf"/>
</dbReference>
<dbReference type="InterPro" id="IPR025718">
    <property type="entry name" value="SAP30_Sin3-bd"/>
</dbReference>
<dbReference type="InterPro" id="IPR025717">
    <property type="entry name" value="SAP30_zn-finger"/>
</dbReference>
<dbReference type="PANTHER" id="PTHR13286:SF5">
    <property type="entry name" value="HISTONE DEACETYLASE COMPLEX SUBUNIT SAP30L"/>
    <property type="match status" value="1"/>
</dbReference>
<dbReference type="PANTHER" id="PTHR13286">
    <property type="entry name" value="SAP30"/>
    <property type="match status" value="1"/>
</dbReference>
<dbReference type="Pfam" id="PF13867">
    <property type="entry name" value="SAP30_Sin3_bdg"/>
    <property type="match status" value="1"/>
</dbReference>
<dbReference type="Pfam" id="PF13866">
    <property type="entry name" value="zf-SAP30"/>
    <property type="match status" value="1"/>
</dbReference>
<organism>
    <name type="scientific">Xenopus tropicalis</name>
    <name type="common">Western clawed frog</name>
    <name type="synonym">Silurana tropicalis</name>
    <dbReference type="NCBI Taxonomy" id="8364"/>
    <lineage>
        <taxon>Eukaryota</taxon>
        <taxon>Metazoa</taxon>
        <taxon>Chordata</taxon>
        <taxon>Craniata</taxon>
        <taxon>Vertebrata</taxon>
        <taxon>Euteleostomi</taxon>
        <taxon>Amphibia</taxon>
        <taxon>Batrachia</taxon>
        <taxon>Anura</taxon>
        <taxon>Pipoidea</taxon>
        <taxon>Pipidae</taxon>
        <taxon>Xenopodinae</taxon>
        <taxon>Xenopus</taxon>
        <taxon>Silurana</taxon>
    </lineage>
</organism>
<keyword id="KW-0238">DNA-binding</keyword>
<keyword id="KW-0446">Lipid-binding</keyword>
<keyword id="KW-0479">Metal-binding</keyword>
<keyword id="KW-0539">Nucleus</keyword>
<keyword id="KW-1185">Reference proteome</keyword>
<keyword id="KW-0678">Repressor</keyword>
<keyword id="KW-0804">Transcription</keyword>
<keyword id="KW-0805">Transcription regulation</keyword>
<keyword id="KW-0862">Zinc</keyword>
<keyword id="KW-0863">Zinc-finger</keyword>
<name>SP30L_XENTR</name>
<feature type="chain" id="PRO_0000309505" description="Histone deacetylase complex subunit SAP30L">
    <location>
        <begin position="1"/>
        <end position="181"/>
    </location>
</feature>
<feature type="zinc finger region" description="Atypical">
    <location>
        <begin position="26"/>
        <end position="74"/>
    </location>
</feature>
<feature type="region of interest" description="Disordered" evidence="2">
    <location>
        <begin position="82"/>
        <end position="103"/>
    </location>
</feature>
<feature type="region of interest" description="Important for DNA and phosphoinositide binding" evidence="1">
    <location>
        <begin position="85"/>
        <end position="87"/>
    </location>
</feature>
<feature type="short sequence motif" description="Nuclear localization signal (NLS)" evidence="1">
    <location>
        <begin position="83"/>
        <end position="88"/>
    </location>
</feature>
<sequence length="181" mass="20862">MNGFSTEEDSRDGPPAQAAPFFGQTCCLIDGGERCPRPAGNASFSKRVQKSISQKKLKLDIDKSVRHLYICDFHKNYIQSVRNKRKRKTSDDGGDSPEHETDVPEVDLFQLQVNTLRRYKRYYKLQTRPGLNKAQLAETVSRHFRNIPVNEKETLAYFIYMVKSNRSRLDQKSESSKQLEA</sequence>
<gene>
    <name type="primary">sap30l</name>
    <name type="ORF">TEgg038l14.1</name>
</gene>
<proteinExistence type="evidence at transcript level"/>
<reference key="1">
    <citation type="submission" date="2006-10" db="EMBL/GenBank/DDBJ databases">
        <authorList>
            <consortium name="Sanger Xenopus tropicalis EST/cDNA project"/>
        </authorList>
    </citation>
    <scope>NUCLEOTIDE SEQUENCE [LARGE SCALE MRNA]</scope>
    <source>
        <tissue>Egg</tissue>
    </source>
</reference>
<protein>
    <recommendedName>
        <fullName>Histone deacetylase complex subunit SAP30L</fullName>
    </recommendedName>
    <alternativeName>
        <fullName>Sin3 corepressor complex subunit SAP30L</fullName>
    </alternativeName>
    <alternativeName>
        <fullName>Sin3-associated protein p30-like</fullName>
    </alternativeName>
</protein>
<comment type="function">
    <text evidence="1">Functions as a transcription repressor, probably via its interaction with histone deacetylase complexes. Involved in the functional recruitment of the class 1 Sin3-histone deacetylase complex (HDAC) to the nucleolus. Binds DNA, apparently without sequence-specificity, and bends bound double-stranded DNA. Binds phosphoinositol phosphates (phosphoinositol 3-phosphate, phosphoinositol 4-phosphate and phosphoinositol 5-phosphate) via the same basic sequence motif that mediates DNA binding and nuclear import.</text>
</comment>
<comment type="subunit">
    <text evidence="1">Interacts with components of the histone deacetylase complex sin3a, hdac1 and hdac2. Binds histones and nucleosomes.</text>
</comment>
<comment type="subcellular location">
    <subcellularLocation>
        <location evidence="1">Nucleus</location>
        <location evidence="1">Nucleolus</location>
    </subcellularLocation>
</comment>
<comment type="domain">
    <text evidence="1">The zinc-finger domain mediates direct interaction with DNA and phosphoinositol phosphates (phosphoinositol 3-phosphate, phosphoinositol 4-phosphate and phosphoinositol 5-phosphate). In vitro oxydation causes reversible disulfide bond formation between Cys residues in the zinc-finger domain and reversible loss of zinc ion binding.</text>
</comment>
<comment type="similarity">
    <text evidence="3">Belongs to the SAP30 family.</text>
</comment>
<accession>Q28H91</accession>